<proteinExistence type="inferred from homology"/>
<evidence type="ECO:0000255" key="1">
    <source>
        <dbReference type="HAMAP-Rule" id="MF_00022"/>
    </source>
</evidence>
<name>SYE_THEFY</name>
<dbReference type="EC" id="6.1.1.17" evidence="1"/>
<dbReference type="EMBL" id="CP000088">
    <property type="protein sequence ID" value="AAZ54661.1"/>
    <property type="molecule type" value="Genomic_DNA"/>
</dbReference>
<dbReference type="SMR" id="Q47SA6"/>
<dbReference type="STRING" id="269800.Tfu_0623"/>
<dbReference type="KEGG" id="tfu:Tfu_0623"/>
<dbReference type="eggNOG" id="COG0008">
    <property type="taxonomic scope" value="Bacteria"/>
</dbReference>
<dbReference type="HOGENOM" id="CLU_015768_6_1_11"/>
<dbReference type="OrthoDB" id="9807503at2"/>
<dbReference type="GO" id="GO:0005829">
    <property type="term" value="C:cytosol"/>
    <property type="evidence" value="ECO:0007669"/>
    <property type="project" value="TreeGrafter"/>
</dbReference>
<dbReference type="GO" id="GO:0005524">
    <property type="term" value="F:ATP binding"/>
    <property type="evidence" value="ECO:0007669"/>
    <property type="project" value="UniProtKB-UniRule"/>
</dbReference>
<dbReference type="GO" id="GO:0004818">
    <property type="term" value="F:glutamate-tRNA ligase activity"/>
    <property type="evidence" value="ECO:0007669"/>
    <property type="project" value="UniProtKB-UniRule"/>
</dbReference>
<dbReference type="GO" id="GO:0000049">
    <property type="term" value="F:tRNA binding"/>
    <property type="evidence" value="ECO:0007669"/>
    <property type="project" value="InterPro"/>
</dbReference>
<dbReference type="GO" id="GO:0008270">
    <property type="term" value="F:zinc ion binding"/>
    <property type="evidence" value="ECO:0007669"/>
    <property type="project" value="UniProtKB-UniRule"/>
</dbReference>
<dbReference type="GO" id="GO:0006424">
    <property type="term" value="P:glutamyl-tRNA aminoacylation"/>
    <property type="evidence" value="ECO:0007669"/>
    <property type="project" value="UniProtKB-UniRule"/>
</dbReference>
<dbReference type="CDD" id="cd00808">
    <property type="entry name" value="GluRS_core"/>
    <property type="match status" value="1"/>
</dbReference>
<dbReference type="Gene3D" id="1.10.10.350">
    <property type="match status" value="1"/>
</dbReference>
<dbReference type="Gene3D" id="1.10.8.70">
    <property type="entry name" value="Glutamate-tRNA synthetase, class I, anticodon-binding domain 1"/>
    <property type="match status" value="1"/>
</dbReference>
<dbReference type="Gene3D" id="3.40.50.620">
    <property type="entry name" value="HUPs"/>
    <property type="match status" value="1"/>
</dbReference>
<dbReference type="HAMAP" id="MF_00022">
    <property type="entry name" value="Glu_tRNA_synth_type1"/>
    <property type="match status" value="1"/>
</dbReference>
<dbReference type="InterPro" id="IPR045462">
    <property type="entry name" value="aa-tRNA-synth_I_cd-bd"/>
</dbReference>
<dbReference type="InterPro" id="IPR020751">
    <property type="entry name" value="aa-tRNA-synth_I_codon-bd_sub2"/>
</dbReference>
<dbReference type="InterPro" id="IPR001412">
    <property type="entry name" value="aa-tRNA-synth_I_CS"/>
</dbReference>
<dbReference type="InterPro" id="IPR008925">
    <property type="entry name" value="aa_tRNA-synth_I_cd-bd_sf"/>
</dbReference>
<dbReference type="InterPro" id="IPR004527">
    <property type="entry name" value="Glu-tRNA-ligase_bac/mito"/>
</dbReference>
<dbReference type="InterPro" id="IPR020752">
    <property type="entry name" value="Glu-tRNA-synth_I_codon-bd_sub1"/>
</dbReference>
<dbReference type="InterPro" id="IPR000924">
    <property type="entry name" value="Glu/Gln-tRNA-synth"/>
</dbReference>
<dbReference type="InterPro" id="IPR020058">
    <property type="entry name" value="Glu/Gln-tRNA-synth_Ib_cat-dom"/>
</dbReference>
<dbReference type="InterPro" id="IPR049940">
    <property type="entry name" value="GluQ/Sye"/>
</dbReference>
<dbReference type="InterPro" id="IPR033910">
    <property type="entry name" value="GluRS_core"/>
</dbReference>
<dbReference type="InterPro" id="IPR014729">
    <property type="entry name" value="Rossmann-like_a/b/a_fold"/>
</dbReference>
<dbReference type="NCBIfam" id="TIGR00464">
    <property type="entry name" value="gltX_bact"/>
    <property type="match status" value="1"/>
</dbReference>
<dbReference type="PANTHER" id="PTHR43311">
    <property type="entry name" value="GLUTAMATE--TRNA LIGASE"/>
    <property type="match status" value="1"/>
</dbReference>
<dbReference type="PANTHER" id="PTHR43311:SF2">
    <property type="entry name" value="GLUTAMATE--TRNA LIGASE, MITOCHONDRIAL-RELATED"/>
    <property type="match status" value="1"/>
</dbReference>
<dbReference type="Pfam" id="PF19269">
    <property type="entry name" value="Anticodon_2"/>
    <property type="match status" value="1"/>
</dbReference>
<dbReference type="Pfam" id="PF00749">
    <property type="entry name" value="tRNA-synt_1c"/>
    <property type="match status" value="1"/>
</dbReference>
<dbReference type="PRINTS" id="PR00987">
    <property type="entry name" value="TRNASYNTHGLU"/>
</dbReference>
<dbReference type="SUPFAM" id="SSF48163">
    <property type="entry name" value="An anticodon-binding domain of class I aminoacyl-tRNA synthetases"/>
    <property type="match status" value="1"/>
</dbReference>
<dbReference type="SUPFAM" id="SSF52374">
    <property type="entry name" value="Nucleotidylyl transferase"/>
    <property type="match status" value="1"/>
</dbReference>
<dbReference type="PROSITE" id="PS00178">
    <property type="entry name" value="AA_TRNA_LIGASE_I"/>
    <property type="match status" value="1"/>
</dbReference>
<gene>
    <name evidence="1" type="primary">gltX</name>
    <name type="ordered locus">Tfu_0623</name>
</gene>
<feature type="chain" id="PRO_0000237415" description="Glutamate--tRNA ligase">
    <location>
        <begin position="1"/>
        <end position="477"/>
    </location>
</feature>
<feature type="short sequence motif" description="'HIGH' region" evidence="1">
    <location>
        <begin position="12"/>
        <end position="22"/>
    </location>
</feature>
<feature type="short sequence motif" description="'KMSKS' region" evidence="1">
    <location>
        <begin position="238"/>
        <end position="242"/>
    </location>
</feature>
<feature type="binding site" evidence="1">
    <location>
        <position position="106"/>
    </location>
    <ligand>
        <name>Zn(2+)</name>
        <dbReference type="ChEBI" id="CHEBI:29105"/>
    </ligand>
</feature>
<feature type="binding site" evidence="1">
    <location>
        <position position="108"/>
    </location>
    <ligand>
        <name>Zn(2+)</name>
        <dbReference type="ChEBI" id="CHEBI:29105"/>
    </ligand>
</feature>
<feature type="binding site" evidence="1">
    <location>
        <position position="128"/>
    </location>
    <ligand>
        <name>Zn(2+)</name>
        <dbReference type="ChEBI" id="CHEBI:29105"/>
    </ligand>
</feature>
<feature type="binding site" evidence="1">
    <location>
        <position position="130"/>
    </location>
    <ligand>
        <name>Zn(2+)</name>
        <dbReference type="ChEBI" id="CHEBI:29105"/>
    </ligand>
</feature>
<feature type="binding site" evidence="1">
    <location>
        <position position="241"/>
    </location>
    <ligand>
        <name>ATP</name>
        <dbReference type="ChEBI" id="CHEBI:30616"/>
    </ligand>
</feature>
<organism>
    <name type="scientific">Thermobifida fusca (strain YX)</name>
    <dbReference type="NCBI Taxonomy" id="269800"/>
    <lineage>
        <taxon>Bacteria</taxon>
        <taxon>Bacillati</taxon>
        <taxon>Actinomycetota</taxon>
        <taxon>Actinomycetes</taxon>
        <taxon>Streptosporangiales</taxon>
        <taxon>Nocardiopsidaceae</taxon>
        <taxon>Thermobifida</taxon>
    </lineage>
</organism>
<keyword id="KW-0030">Aminoacyl-tRNA synthetase</keyword>
<keyword id="KW-0067">ATP-binding</keyword>
<keyword id="KW-0963">Cytoplasm</keyword>
<keyword id="KW-0436">Ligase</keyword>
<keyword id="KW-0479">Metal-binding</keyword>
<keyword id="KW-0547">Nucleotide-binding</keyword>
<keyword id="KW-0648">Protein biosynthesis</keyword>
<keyword id="KW-0862">Zinc</keyword>
<accession>Q47SA6</accession>
<reference key="1">
    <citation type="journal article" date="2007" name="J. Bacteriol.">
        <title>Genome sequence and analysis of the soil cellulolytic actinomycete Thermobifida fusca YX.</title>
        <authorList>
            <person name="Lykidis A."/>
            <person name="Mavromatis K."/>
            <person name="Ivanova N."/>
            <person name="Anderson I."/>
            <person name="Land M."/>
            <person name="DiBartolo G."/>
            <person name="Martinez M."/>
            <person name="Lapidus A."/>
            <person name="Lucas S."/>
            <person name="Copeland A."/>
            <person name="Richardson P."/>
            <person name="Wilson D.B."/>
            <person name="Kyrpides N."/>
        </authorList>
    </citation>
    <scope>NUCLEOTIDE SEQUENCE [LARGE SCALE GENOMIC DNA]</scope>
    <source>
        <strain>YX</strain>
    </source>
</reference>
<sequence>MTDKAIRTRFAPSPTGMFHVGGARSALFNWALALQQPEGKFVLRIEDTDAARNRPEWTEGILRALSALGIDERDPHFEGPYFQSAYADKHREVAEELYRKGRAYYCDCTREQIQERRGNPHLGYDGYCRDRGLEPGPGRALRFRVPEGGPTVVDDKIRGRVEFDHSAIEDFVIARSDGSPLFVLANVVDDVEMAITHVVRGEEHLSNTPKQQLLWEALGQTPPVWAHLPVIVNEKRQKLSKRRDKVALEDYLAEGYLPEAMVNYLMLLGWGPGDDREIMPFSEMVPLFRLEDVNSSSAFFDEKKLRAFNGEYIRALDTTEFVERCAPWLGSEKAPWPAENFDAQVFEAVAPLAQTRISVLSEIVSYVDFLFLDRPVEDEKSWAKAMKPGVGEEMLTAALERFSDPNLEWRAEPLKAALEEVAAAQGLKLGKAQAPVRVAVTGRTVGLPLFESLELLGRSRVQERLRAALEKLKAAGE</sequence>
<comment type="function">
    <text evidence="1">Catalyzes the attachment of glutamate to tRNA(Glu) in a two-step reaction: glutamate is first activated by ATP to form Glu-AMP and then transferred to the acceptor end of tRNA(Glu).</text>
</comment>
<comment type="catalytic activity">
    <reaction evidence="1">
        <text>tRNA(Glu) + L-glutamate + ATP = L-glutamyl-tRNA(Glu) + AMP + diphosphate</text>
        <dbReference type="Rhea" id="RHEA:23540"/>
        <dbReference type="Rhea" id="RHEA-COMP:9663"/>
        <dbReference type="Rhea" id="RHEA-COMP:9680"/>
        <dbReference type="ChEBI" id="CHEBI:29985"/>
        <dbReference type="ChEBI" id="CHEBI:30616"/>
        <dbReference type="ChEBI" id="CHEBI:33019"/>
        <dbReference type="ChEBI" id="CHEBI:78442"/>
        <dbReference type="ChEBI" id="CHEBI:78520"/>
        <dbReference type="ChEBI" id="CHEBI:456215"/>
        <dbReference type="EC" id="6.1.1.17"/>
    </reaction>
</comment>
<comment type="cofactor">
    <cofactor evidence="1">
        <name>Zn(2+)</name>
        <dbReference type="ChEBI" id="CHEBI:29105"/>
    </cofactor>
    <text evidence="1">Binds 1 zinc ion per subunit.</text>
</comment>
<comment type="subunit">
    <text evidence="1">Monomer.</text>
</comment>
<comment type="subcellular location">
    <subcellularLocation>
        <location evidence="1">Cytoplasm</location>
    </subcellularLocation>
</comment>
<comment type="similarity">
    <text evidence="1">Belongs to the class-I aminoacyl-tRNA synthetase family. Glutamate--tRNA ligase type 1 subfamily.</text>
</comment>
<protein>
    <recommendedName>
        <fullName evidence="1">Glutamate--tRNA ligase</fullName>
        <ecNumber evidence="1">6.1.1.17</ecNumber>
    </recommendedName>
    <alternativeName>
        <fullName evidence="1">Glutamyl-tRNA synthetase</fullName>
        <shortName evidence="1">GluRS</shortName>
    </alternativeName>
</protein>